<evidence type="ECO:0000255" key="1">
    <source>
        <dbReference type="HAMAP-Rule" id="MF_01521"/>
    </source>
</evidence>
<evidence type="ECO:0000305" key="2"/>
<keyword id="KW-0997">Cell inner membrane</keyword>
<keyword id="KW-1003">Cell membrane</keyword>
<keyword id="KW-0406">Ion transport</keyword>
<keyword id="KW-0464">Manganese</keyword>
<keyword id="KW-0472">Membrane</keyword>
<keyword id="KW-0812">Transmembrane</keyword>
<keyword id="KW-1133">Transmembrane helix</keyword>
<keyword id="KW-0813">Transport</keyword>
<organism>
    <name type="scientific">Salmonella typhi</name>
    <dbReference type="NCBI Taxonomy" id="90370"/>
    <lineage>
        <taxon>Bacteria</taxon>
        <taxon>Pseudomonadati</taxon>
        <taxon>Pseudomonadota</taxon>
        <taxon>Gammaproteobacteria</taxon>
        <taxon>Enterobacterales</taxon>
        <taxon>Enterobacteriaceae</taxon>
        <taxon>Salmonella</taxon>
    </lineage>
</organism>
<accession>Q8Z670</accession>
<accession>Q7CAH0</accession>
<reference key="1">
    <citation type="journal article" date="2001" name="Nature">
        <title>Complete genome sequence of a multiple drug resistant Salmonella enterica serovar Typhi CT18.</title>
        <authorList>
            <person name="Parkhill J."/>
            <person name="Dougan G."/>
            <person name="James K.D."/>
            <person name="Thomson N.R."/>
            <person name="Pickard D."/>
            <person name="Wain J."/>
            <person name="Churcher C.M."/>
            <person name="Mungall K.L."/>
            <person name="Bentley S.D."/>
            <person name="Holden M.T.G."/>
            <person name="Sebaihia M."/>
            <person name="Baker S."/>
            <person name="Basham D."/>
            <person name="Brooks K."/>
            <person name="Chillingworth T."/>
            <person name="Connerton P."/>
            <person name="Cronin A."/>
            <person name="Davis P."/>
            <person name="Davies R.M."/>
            <person name="Dowd L."/>
            <person name="White N."/>
            <person name="Farrar J."/>
            <person name="Feltwell T."/>
            <person name="Hamlin N."/>
            <person name="Haque A."/>
            <person name="Hien T.T."/>
            <person name="Holroyd S."/>
            <person name="Jagels K."/>
            <person name="Krogh A."/>
            <person name="Larsen T.S."/>
            <person name="Leather S."/>
            <person name="Moule S."/>
            <person name="O'Gaora P."/>
            <person name="Parry C."/>
            <person name="Quail M.A."/>
            <person name="Rutherford K.M."/>
            <person name="Simmonds M."/>
            <person name="Skelton J."/>
            <person name="Stevens K."/>
            <person name="Whitehead S."/>
            <person name="Barrell B.G."/>
        </authorList>
    </citation>
    <scope>NUCLEOTIDE SEQUENCE [LARGE SCALE GENOMIC DNA]</scope>
    <source>
        <strain>CT18</strain>
    </source>
</reference>
<reference key="2">
    <citation type="journal article" date="2003" name="J. Bacteriol.">
        <title>Comparative genomics of Salmonella enterica serovar Typhi strains Ty2 and CT18.</title>
        <authorList>
            <person name="Deng W."/>
            <person name="Liou S.-R."/>
            <person name="Plunkett G. III"/>
            <person name="Mayhew G.F."/>
            <person name="Rose D.J."/>
            <person name="Burland V."/>
            <person name="Kodoyianni V."/>
            <person name="Schwartz D.C."/>
            <person name="Blattner F.R."/>
        </authorList>
    </citation>
    <scope>NUCLEOTIDE SEQUENCE [LARGE SCALE GENOMIC DNA]</scope>
    <source>
        <strain>ATCC 700931 / Ty2</strain>
    </source>
</reference>
<protein>
    <recommendedName>
        <fullName evidence="1">Probable manganese efflux pump MntP</fullName>
    </recommendedName>
</protein>
<feature type="chain" id="PRO_0000155665" description="Probable manganese efflux pump MntP">
    <location>
        <begin position="1"/>
        <end position="188"/>
    </location>
</feature>
<feature type="transmembrane region" description="Helical" evidence="1">
    <location>
        <begin position="3"/>
        <end position="23"/>
    </location>
</feature>
<feature type="transmembrane region" description="Helical" evidence="1">
    <location>
        <begin position="41"/>
        <end position="61"/>
    </location>
</feature>
<feature type="transmembrane region" description="Helical" evidence="1">
    <location>
        <begin position="66"/>
        <end position="86"/>
    </location>
</feature>
<feature type="transmembrane region" description="Helical" evidence="1">
    <location>
        <begin position="106"/>
        <end position="128"/>
    </location>
</feature>
<feature type="transmembrane region" description="Helical" evidence="1">
    <location>
        <begin position="143"/>
        <end position="163"/>
    </location>
</feature>
<feature type="transmembrane region" description="Helical" evidence="1">
    <location>
        <begin position="168"/>
        <end position="188"/>
    </location>
</feature>
<sequence length="188" mass="20049">MHFTATVLLAFGMSMDAFAASIGKGATLHKPKFSEALRTGLIFGAVETLTPLIGWGLGILASKFVLEWNHWIAFVLLIFLGGRMIIEGIRGGSDEDETPLRRHSFWLLVTTAIATSLDAMAVGVGLAFLQVNIIATALAIGCATLIMSTLGMMIGRFIGPMLGKRAEILGGVVLIGIGVQILWTHFHG</sequence>
<name>MNTP_SALTI</name>
<comment type="function">
    <text evidence="1">Probably functions as a manganese efflux pump.</text>
</comment>
<comment type="subcellular location">
    <subcellularLocation>
        <location evidence="1">Cell inner membrane</location>
        <topology evidence="1">Multi-pass membrane protein</topology>
    </subcellularLocation>
</comment>
<comment type="similarity">
    <text evidence="1">Belongs to the MntP (TC 9.B.29) family.</text>
</comment>
<comment type="sequence caution" evidence="2">
    <conflict type="erroneous initiation">
        <sequence resource="EMBL-CDS" id="AAO68710"/>
    </conflict>
</comment>
<comment type="sequence caution" evidence="2">
    <conflict type="erroneous initiation">
        <sequence resource="EMBL-CDS" id="CAD05516"/>
    </conflict>
</comment>
<dbReference type="EMBL" id="AL513382">
    <property type="protein sequence ID" value="CAD05516.1"/>
    <property type="status" value="ALT_INIT"/>
    <property type="molecule type" value="Genomic_DNA"/>
</dbReference>
<dbReference type="EMBL" id="AE014613">
    <property type="protein sequence ID" value="AAO68710.1"/>
    <property type="status" value="ALT_INIT"/>
    <property type="molecule type" value="Genomic_DNA"/>
</dbReference>
<dbReference type="RefSeq" id="NP_456340.1">
    <property type="nucleotide sequence ID" value="NC_003198.1"/>
</dbReference>
<dbReference type="RefSeq" id="WP_001518359.1">
    <property type="nucleotide sequence ID" value="NZ_WSUR01000004.1"/>
</dbReference>
<dbReference type="STRING" id="220341.gene:17585881"/>
<dbReference type="KEGG" id="stt:t1044"/>
<dbReference type="KEGG" id="sty:STY1963"/>
<dbReference type="PATRIC" id="fig|220341.7.peg.1981"/>
<dbReference type="eggNOG" id="COG1971">
    <property type="taxonomic scope" value="Bacteria"/>
</dbReference>
<dbReference type="HOGENOM" id="CLU_096410_0_0_6"/>
<dbReference type="OMA" id="WHFGLFQ"/>
<dbReference type="OrthoDB" id="9811590at2"/>
<dbReference type="Proteomes" id="UP000000541">
    <property type="component" value="Chromosome"/>
</dbReference>
<dbReference type="Proteomes" id="UP000002670">
    <property type="component" value="Chromosome"/>
</dbReference>
<dbReference type="GO" id="GO:0005886">
    <property type="term" value="C:plasma membrane"/>
    <property type="evidence" value="ECO:0007669"/>
    <property type="project" value="UniProtKB-SubCell"/>
</dbReference>
<dbReference type="GO" id="GO:0005384">
    <property type="term" value="F:manganese ion transmembrane transporter activity"/>
    <property type="evidence" value="ECO:0007669"/>
    <property type="project" value="UniProtKB-UniRule"/>
</dbReference>
<dbReference type="HAMAP" id="MF_01521">
    <property type="entry name" value="MntP_pump"/>
    <property type="match status" value="1"/>
</dbReference>
<dbReference type="InterPro" id="IPR003810">
    <property type="entry name" value="Mntp/YtaF"/>
</dbReference>
<dbReference type="InterPro" id="IPR022929">
    <property type="entry name" value="Put_MntP"/>
</dbReference>
<dbReference type="NCBIfam" id="NF008546">
    <property type="entry name" value="PRK11469.1"/>
    <property type="match status" value="1"/>
</dbReference>
<dbReference type="PANTHER" id="PTHR35529">
    <property type="entry name" value="MANGANESE EFFLUX PUMP MNTP-RELATED"/>
    <property type="match status" value="1"/>
</dbReference>
<dbReference type="PANTHER" id="PTHR35529:SF1">
    <property type="entry name" value="MANGANESE EFFLUX PUMP MNTP-RELATED"/>
    <property type="match status" value="1"/>
</dbReference>
<dbReference type="Pfam" id="PF02659">
    <property type="entry name" value="Mntp"/>
    <property type="match status" value="1"/>
</dbReference>
<gene>
    <name evidence="1" type="primary">mntP</name>
    <name type="synonym">yebN</name>
    <name type="ordered locus">STY1963</name>
    <name type="ordered locus">t1044</name>
</gene>
<proteinExistence type="inferred from homology"/>